<reference key="1">
    <citation type="journal article" date="2006" name="J. Bacteriol.">
        <title>The Methanosarcina barkeri genome: comparative analysis with Methanosarcina acetivorans and Methanosarcina mazei reveals extensive rearrangement within methanosarcinal genomes.</title>
        <authorList>
            <person name="Maeder D.L."/>
            <person name="Anderson I."/>
            <person name="Brettin T.S."/>
            <person name="Bruce D.C."/>
            <person name="Gilna P."/>
            <person name="Han C.S."/>
            <person name="Lapidus A."/>
            <person name="Metcalf W.W."/>
            <person name="Saunders E."/>
            <person name="Tapia R."/>
            <person name="Sowers K.R."/>
        </authorList>
    </citation>
    <scope>NUCLEOTIDE SEQUENCE [LARGE SCALE GENOMIC DNA]</scope>
    <source>
        <strain>Fusaro / DSM 804</strain>
    </source>
</reference>
<reference key="2">
    <citation type="journal article" date="1996" name="Eur. J. Biochem.">
        <title>Catalytic properties, molecular composition and sequence alignments of pyruvate: ferredoxin oxidoreductase from the methanogenic archaeon Methanosarcina barkeri (strain Fusaro).</title>
        <authorList>
            <person name="Bock A.-K."/>
            <person name="Kunow J."/>
            <person name="Glasemacher J."/>
            <person name="Schoenheit P."/>
        </authorList>
    </citation>
    <scope>PROTEIN SEQUENCE OF 1-30</scope>
</reference>
<keyword id="KW-0004">4Fe-4S</keyword>
<keyword id="KW-0903">Direct protein sequencing</keyword>
<keyword id="KW-0249">Electron transport</keyword>
<keyword id="KW-0408">Iron</keyword>
<keyword id="KW-0411">Iron-sulfur</keyword>
<keyword id="KW-0479">Metal-binding</keyword>
<keyword id="KW-0677">Repeat</keyword>
<keyword id="KW-0813">Transport</keyword>
<dbReference type="EMBL" id="CP000099">
    <property type="protein sequence ID" value="AAZ69969.1"/>
    <property type="molecule type" value="Genomic_DNA"/>
</dbReference>
<dbReference type="PIR" id="S65419">
    <property type="entry name" value="S65419"/>
</dbReference>
<dbReference type="SMR" id="P80524"/>
<dbReference type="STRING" id="269797.Mbar_A1001"/>
<dbReference type="PaxDb" id="269797-Mbar_A1001"/>
<dbReference type="KEGG" id="mba:Mbar_A1001"/>
<dbReference type="eggNOG" id="arCOG01605">
    <property type="taxonomic scope" value="Archaea"/>
</dbReference>
<dbReference type="HOGENOM" id="CLU_139698_1_1_2"/>
<dbReference type="OrthoDB" id="23478at2157"/>
<dbReference type="BRENDA" id="1.2.7.1">
    <property type="organism ID" value="3250"/>
</dbReference>
<dbReference type="GO" id="GO:0051539">
    <property type="term" value="F:4 iron, 4 sulfur cluster binding"/>
    <property type="evidence" value="ECO:0007669"/>
    <property type="project" value="UniProtKB-KW"/>
</dbReference>
<dbReference type="GO" id="GO:0046872">
    <property type="term" value="F:metal ion binding"/>
    <property type="evidence" value="ECO:0007669"/>
    <property type="project" value="UniProtKB-KW"/>
</dbReference>
<dbReference type="GO" id="GO:0016625">
    <property type="term" value="F:oxidoreductase activity, acting on the aldehyde or oxo group of donors, iron-sulfur protein as acceptor"/>
    <property type="evidence" value="ECO:0007669"/>
    <property type="project" value="InterPro"/>
</dbReference>
<dbReference type="Gene3D" id="3.30.70.20">
    <property type="match status" value="1"/>
</dbReference>
<dbReference type="InterPro" id="IPR017896">
    <property type="entry name" value="4Fe4S_Fe-S-bd"/>
</dbReference>
<dbReference type="InterPro" id="IPR017900">
    <property type="entry name" value="4Fe4S_Fe_S_CS"/>
</dbReference>
<dbReference type="InterPro" id="IPR011898">
    <property type="entry name" value="PorD_KorD"/>
</dbReference>
<dbReference type="InterPro" id="IPR053389">
    <property type="entry name" value="Pyruvate_synthase_PorD"/>
</dbReference>
<dbReference type="NCBIfam" id="NF040684">
    <property type="entry name" value="PorD_Arch"/>
    <property type="match status" value="1"/>
</dbReference>
<dbReference type="NCBIfam" id="TIGR02179">
    <property type="entry name" value="PorD_KorD"/>
    <property type="match status" value="1"/>
</dbReference>
<dbReference type="PANTHER" id="PTHR43724">
    <property type="entry name" value="PYRUVATE SYNTHASE SUBUNIT PORD"/>
    <property type="match status" value="1"/>
</dbReference>
<dbReference type="PANTHER" id="PTHR43724:SF1">
    <property type="entry name" value="PYRUVATE SYNTHASE SUBUNIT PORD"/>
    <property type="match status" value="1"/>
</dbReference>
<dbReference type="Pfam" id="PF14697">
    <property type="entry name" value="Fer4_21"/>
    <property type="match status" value="1"/>
</dbReference>
<dbReference type="SUPFAM" id="SSF54862">
    <property type="entry name" value="4Fe-4S ferredoxins"/>
    <property type="match status" value="1"/>
</dbReference>
<dbReference type="PROSITE" id="PS00198">
    <property type="entry name" value="4FE4S_FER_1"/>
    <property type="match status" value="2"/>
</dbReference>
<dbReference type="PROSITE" id="PS51379">
    <property type="entry name" value="4FE4S_FER_2"/>
    <property type="match status" value="2"/>
</dbReference>
<gene>
    <name type="primary">porD</name>
    <name type="ordered locus">Mbar_A1001</name>
</gene>
<accession>P80524</accession>
<accession>Q46DS3</accession>
<proteinExistence type="evidence at protein level"/>
<organism>
    <name type="scientific">Methanosarcina barkeri (strain Fusaro / DSM 804)</name>
    <dbReference type="NCBI Taxonomy" id="269797"/>
    <lineage>
        <taxon>Archaea</taxon>
        <taxon>Methanobacteriati</taxon>
        <taxon>Methanobacteriota</taxon>
        <taxon>Stenosarchaea group</taxon>
        <taxon>Methanomicrobia</taxon>
        <taxon>Methanosarcinales</taxon>
        <taxon>Methanosarcinaceae</taxon>
        <taxon>Methanosarcina</taxon>
    </lineage>
</organism>
<sequence>MKNEGEKEGLNISRCRVCKPGSTLINKTGGWRNFRPVYIYEKCTKCGICHIVCPDMSVKPRENGFFEYDYDYCKGCGICANECPADAIEMILEEK</sequence>
<protein>
    <recommendedName>
        <fullName>Pyruvate synthase subunit PorD</fullName>
    </recommendedName>
    <alternativeName>
        <fullName>Pyruvate oxidoreductase delta chain</fullName>
        <shortName>POR</shortName>
    </alternativeName>
    <alternativeName>
        <fullName>Pyruvic-ferredoxin oxidoreductase subunit delta</fullName>
    </alternativeName>
</protein>
<evidence type="ECO:0000250" key="1">
    <source>
        <dbReference type="UniProtKB" id="P94692"/>
    </source>
</evidence>
<evidence type="ECO:0000255" key="2">
    <source>
        <dbReference type="PROSITE-ProRule" id="PRU00711"/>
    </source>
</evidence>
<feature type="chain" id="PRO_0000097127" description="Pyruvate synthase subunit PorD">
    <location>
        <begin position="1"/>
        <end position="95"/>
    </location>
</feature>
<feature type="domain" description="4Fe-4S ferredoxin-type 1" evidence="2">
    <location>
        <begin position="34"/>
        <end position="63"/>
    </location>
</feature>
<feature type="domain" description="4Fe-4S ferredoxin-type 2" evidence="2">
    <location>
        <begin position="64"/>
        <end position="93"/>
    </location>
</feature>
<feature type="binding site" evidence="1">
    <location>
        <position position="43"/>
    </location>
    <ligand>
        <name>[4Fe-4S] cluster</name>
        <dbReference type="ChEBI" id="CHEBI:49883"/>
        <label>1</label>
    </ligand>
</feature>
<feature type="binding site" evidence="1">
    <location>
        <position position="46"/>
    </location>
    <ligand>
        <name>[4Fe-4S] cluster</name>
        <dbReference type="ChEBI" id="CHEBI:49883"/>
        <label>1</label>
    </ligand>
</feature>
<feature type="binding site" evidence="1">
    <location>
        <position position="49"/>
    </location>
    <ligand>
        <name>[4Fe-4S] cluster</name>
        <dbReference type="ChEBI" id="CHEBI:49883"/>
        <label>1</label>
    </ligand>
</feature>
<feature type="binding site" evidence="1">
    <location>
        <position position="53"/>
    </location>
    <ligand>
        <name>[4Fe-4S] cluster</name>
        <dbReference type="ChEBI" id="CHEBI:49883"/>
        <label>2</label>
    </ligand>
</feature>
<feature type="binding site" evidence="1">
    <location>
        <position position="73"/>
    </location>
    <ligand>
        <name>[4Fe-4S] cluster</name>
        <dbReference type="ChEBI" id="CHEBI:49883"/>
        <label>2</label>
    </ligand>
</feature>
<feature type="binding site" evidence="1">
    <location>
        <position position="76"/>
    </location>
    <ligand>
        <name>[4Fe-4S] cluster</name>
        <dbReference type="ChEBI" id="CHEBI:49883"/>
        <label>2</label>
    </ligand>
</feature>
<feature type="binding site" evidence="1">
    <location>
        <position position="79"/>
    </location>
    <ligand>
        <name>[4Fe-4S] cluster</name>
        <dbReference type="ChEBI" id="CHEBI:49883"/>
        <label>2</label>
    </ligand>
</feature>
<feature type="binding site" evidence="1">
    <location>
        <position position="83"/>
    </location>
    <ligand>
        <name>[4Fe-4S] cluster</name>
        <dbReference type="ChEBI" id="CHEBI:49883"/>
        <label>1</label>
    </ligand>
</feature>
<name>PORD_METBF</name>
<comment type="cofactor">
    <cofactor evidence="1">
        <name>[4Fe-4S] cluster</name>
        <dbReference type="ChEBI" id="CHEBI:49883"/>
    </cofactor>
    <text evidence="1">Binds 2 [4Fe-4S] clusters.</text>
</comment>
<comment type="subunit">
    <text>Heterotetramer of one alpha, one beta, one delta and one gamma chain.</text>
</comment>